<keyword id="KW-0224">Dipeptidase</keyword>
<keyword id="KW-0378">Hydrolase</keyword>
<keyword id="KW-0479">Metal-binding</keyword>
<keyword id="KW-0482">Metalloprotease</keyword>
<keyword id="KW-0645">Protease</keyword>
<keyword id="KW-1185">Reference proteome</keyword>
<keyword id="KW-0862">Zinc</keyword>
<name>ATAJ_ASPTN</name>
<accession>Q0CS61</accession>
<evidence type="ECO:0000255" key="1">
    <source>
        <dbReference type="PROSITE-ProRule" id="PRU10073"/>
    </source>
</evidence>
<evidence type="ECO:0000256" key="2">
    <source>
        <dbReference type="SAM" id="MobiDB-lite"/>
    </source>
</evidence>
<evidence type="ECO:0000269" key="3">
    <source>
    </source>
</evidence>
<evidence type="ECO:0000269" key="4">
    <source>
    </source>
</evidence>
<evidence type="ECO:0000303" key="5">
    <source>
    </source>
</evidence>
<sequence>MTTDLNQNPYLVRAQQLLCRVPLIDGHNDFPFIIRGLYQNNLTRASLNDLPIGQTDISRLRQGSVGGQFWSAYVPNPVHSDKESDEAYLECLRQTLQQIDVIHRMVSEHPDVFGLAQSAADVWKIFRAGRIASLIGIEGLHQIAHSPSALRMMHKLGVRYATLCHTKNNRYCDSAVDRHTSSPWSEYGGQTHDPGDEPSRNVRTGFHSLTLKYLTAVHGRIVDLSHTSEATQRDAIAISKAPVIFSHSASSSLTPSPRNVTDEILHQLKRNGGLIMVCFLRDLVNSADDANTTGSRVVDHILYIAETIGYDHVGIGSDFDGMLEGPLGLDDVSRFPELVADLFRRGVSEERIEKIVGLNTLRVMKQVEDVAVREQAEGSTGVLCDVVKPIWTAEQRQMLAEQGRTRGLRP</sequence>
<gene>
    <name evidence="5" type="primary">ataJ</name>
    <name type="ORF">ATEG_03473</name>
</gene>
<protein>
    <recommendedName>
        <fullName evidence="5">Dipeptidase ataJ</fullName>
        <ecNumber evidence="1">3.4.13.19</ecNumber>
    </recommendedName>
    <alternativeName>
        <fullName evidence="5">Acetylaranotin biosynthesis cluster protein J</fullName>
    </alternativeName>
</protein>
<dbReference type="EC" id="3.4.13.19" evidence="1"/>
<dbReference type="EMBL" id="CH476597">
    <property type="protein sequence ID" value="EAU36747.1"/>
    <property type="molecule type" value="Genomic_DNA"/>
</dbReference>
<dbReference type="RefSeq" id="XP_001212651.1">
    <property type="nucleotide sequence ID" value="XM_001212651.1"/>
</dbReference>
<dbReference type="SMR" id="Q0CS61"/>
<dbReference type="STRING" id="341663.Q0CS61"/>
<dbReference type="MEROPS" id="M19.013"/>
<dbReference type="EnsemblFungi" id="EAU36747">
    <property type="protein sequence ID" value="EAU36747"/>
    <property type="gene ID" value="ATEG_03473"/>
</dbReference>
<dbReference type="GeneID" id="4317581"/>
<dbReference type="VEuPathDB" id="FungiDB:ATEG_03473"/>
<dbReference type="eggNOG" id="KOG4127">
    <property type="taxonomic scope" value="Eukaryota"/>
</dbReference>
<dbReference type="HOGENOM" id="CLU_031404_4_0_1"/>
<dbReference type="OMA" id="QQPRACF"/>
<dbReference type="OrthoDB" id="445695at2759"/>
<dbReference type="Proteomes" id="UP000007963">
    <property type="component" value="Unassembled WGS sequence"/>
</dbReference>
<dbReference type="GO" id="GO:0046872">
    <property type="term" value="F:metal ion binding"/>
    <property type="evidence" value="ECO:0007669"/>
    <property type="project" value="UniProtKB-KW"/>
</dbReference>
<dbReference type="GO" id="GO:0070573">
    <property type="term" value="F:metallodipeptidase activity"/>
    <property type="evidence" value="ECO:0007669"/>
    <property type="project" value="InterPro"/>
</dbReference>
<dbReference type="GO" id="GO:0006508">
    <property type="term" value="P:proteolysis"/>
    <property type="evidence" value="ECO:0007669"/>
    <property type="project" value="UniProtKB-KW"/>
</dbReference>
<dbReference type="CDD" id="cd01301">
    <property type="entry name" value="rDP_like"/>
    <property type="match status" value="1"/>
</dbReference>
<dbReference type="Gene3D" id="3.20.20.140">
    <property type="entry name" value="Metal-dependent hydrolases"/>
    <property type="match status" value="1"/>
</dbReference>
<dbReference type="InterPro" id="IPR032466">
    <property type="entry name" value="Metal_Hydrolase"/>
</dbReference>
<dbReference type="InterPro" id="IPR008257">
    <property type="entry name" value="Pept_M19"/>
</dbReference>
<dbReference type="PANTHER" id="PTHR10443:SF12">
    <property type="entry name" value="DIPEPTIDASE"/>
    <property type="match status" value="1"/>
</dbReference>
<dbReference type="PANTHER" id="PTHR10443">
    <property type="entry name" value="MICROSOMAL DIPEPTIDASE"/>
    <property type="match status" value="1"/>
</dbReference>
<dbReference type="Pfam" id="PF01244">
    <property type="entry name" value="Peptidase_M19"/>
    <property type="match status" value="1"/>
</dbReference>
<dbReference type="SUPFAM" id="SSF51556">
    <property type="entry name" value="Metallo-dependent hydrolases"/>
    <property type="match status" value="1"/>
</dbReference>
<dbReference type="PROSITE" id="PS51365">
    <property type="entry name" value="RENAL_DIPEPTIDASE_2"/>
    <property type="match status" value="1"/>
</dbReference>
<organism>
    <name type="scientific">Aspergillus terreus (strain NIH 2624 / FGSC A1156)</name>
    <dbReference type="NCBI Taxonomy" id="341663"/>
    <lineage>
        <taxon>Eukaryota</taxon>
        <taxon>Fungi</taxon>
        <taxon>Dikarya</taxon>
        <taxon>Ascomycota</taxon>
        <taxon>Pezizomycotina</taxon>
        <taxon>Eurotiomycetes</taxon>
        <taxon>Eurotiomycetidae</taxon>
        <taxon>Eurotiales</taxon>
        <taxon>Aspergillaceae</taxon>
        <taxon>Aspergillus</taxon>
        <taxon>Aspergillus subgen. Circumdati</taxon>
    </lineage>
</organism>
<reference key="1">
    <citation type="submission" date="2005-09" db="EMBL/GenBank/DDBJ databases">
        <title>Annotation of the Aspergillus terreus NIH2624 genome.</title>
        <authorList>
            <person name="Birren B.W."/>
            <person name="Lander E.S."/>
            <person name="Galagan J.E."/>
            <person name="Nusbaum C."/>
            <person name="Devon K."/>
            <person name="Henn M."/>
            <person name="Ma L.-J."/>
            <person name="Jaffe D.B."/>
            <person name="Butler J."/>
            <person name="Alvarez P."/>
            <person name="Gnerre S."/>
            <person name="Grabherr M."/>
            <person name="Kleber M."/>
            <person name="Mauceli E.W."/>
            <person name="Brockman W."/>
            <person name="Rounsley S."/>
            <person name="Young S.K."/>
            <person name="LaButti K."/>
            <person name="Pushparaj V."/>
            <person name="DeCaprio D."/>
            <person name="Crawford M."/>
            <person name="Koehrsen M."/>
            <person name="Engels R."/>
            <person name="Montgomery P."/>
            <person name="Pearson M."/>
            <person name="Howarth C."/>
            <person name="Larson L."/>
            <person name="Luoma S."/>
            <person name="White J."/>
            <person name="Alvarado L."/>
            <person name="Kodira C.D."/>
            <person name="Zeng Q."/>
            <person name="Oleary S."/>
            <person name="Yandava C."/>
            <person name="Denning D.W."/>
            <person name="Nierman W.C."/>
            <person name="Milne T."/>
            <person name="Madden K."/>
        </authorList>
    </citation>
    <scope>NUCLEOTIDE SEQUENCE [LARGE SCALE GENOMIC DNA]</scope>
    <source>
        <strain>NIH 2624 / FGSC A1156</strain>
    </source>
</reference>
<reference key="2">
    <citation type="journal article" date="2013" name="J. Am. Chem. Soc.">
        <title>Biosynthetic pathway for the epipolythiodioxopiperazine acetylaranotin in Aspergillus terreus revealed by genome-based deletion analysis.</title>
        <authorList>
            <person name="Guo C.J."/>
            <person name="Yeh H.H."/>
            <person name="Chiang Y.M."/>
            <person name="Sanchez J.F."/>
            <person name="Chang S.L."/>
            <person name="Bruno K.S."/>
            <person name="Wang C.C."/>
        </authorList>
    </citation>
    <scope>FUNCTION</scope>
    <scope>DISRUPTION PHENOTYPE</scope>
    <scope>PATHWAY</scope>
</reference>
<reference key="3">
    <citation type="journal article" date="2018" name="Fungal Genet. Biol.">
        <title>Genome-based deletion analysis in Aspergillus terreus reveals the acetylaranotin bis-thiomethyltransferase gene.</title>
        <authorList>
            <person name="Sun W.W."/>
            <person name="Romsdahl J."/>
            <person name="Guo C.J."/>
            <person name="Wang C.C.C."/>
        </authorList>
    </citation>
    <scope>FUNCTION</scope>
</reference>
<feature type="chain" id="PRO_0000440661" description="Dipeptidase ataJ">
    <location>
        <begin position="1"/>
        <end position="410"/>
    </location>
</feature>
<feature type="region of interest" description="Disordered" evidence="2">
    <location>
        <begin position="180"/>
        <end position="200"/>
    </location>
</feature>
<feature type="binding site" evidence="1">
    <location>
        <position position="27"/>
    </location>
    <ligand>
        <name>Zn(2+)</name>
        <dbReference type="ChEBI" id="CHEBI:29105"/>
        <note>catalytic</note>
    </ligand>
</feature>
<feature type="binding site" evidence="1">
    <location>
        <position position="29"/>
    </location>
    <ligand>
        <name>Zn(2+)</name>
        <dbReference type="ChEBI" id="CHEBI:29105"/>
        <note>catalytic</note>
    </ligand>
</feature>
<feature type="binding site" evidence="1">
    <location>
        <position position="138"/>
    </location>
    <ligand>
        <name>Zn(2+)</name>
        <dbReference type="ChEBI" id="CHEBI:29105"/>
        <note>catalytic</note>
    </ligand>
</feature>
<feature type="binding site" evidence="1">
    <location>
        <position position="165"/>
    </location>
    <ligand>
        <name>substrate</name>
    </ligand>
</feature>
<feature type="binding site" evidence="1">
    <location>
        <position position="258"/>
    </location>
    <ligand>
        <name>substrate</name>
    </ligand>
</feature>
<feature type="binding site" evidence="1">
    <location>
        <position position="318"/>
    </location>
    <ligand>
        <name>substrate</name>
    </ligand>
</feature>
<comment type="function">
    <text evidence="3 4">Dipeptidase; part of the gene cluster that mediates the biosynthesis of acetylaranotin, a member of the epipolythiodioxopiperazine (ETP) class of toxins characterized by a disulfide-bridged cyclic dipeptide (PubMed:23586797). The first step of acetylaranotin biosynthesis is performed by the NRPS ataP which produces diketopiperazine cyclo-L-Phe-L-Phe via the condensation of 2 phenylalanines (L-Phe) (PubMed:23586797). The ataC domain of ataTC then catalyzes the formation of bishydroxylation of cyclo-L-Phe-L-Phe (PubMed:23586797). The glutathione S-transferase domain ataG in ataIMG further catalyzes the conjugation of two glutathiones to the bishydroxylated intermediate (PubMed:23586797). Next, the dipeptidase ataJ removes the Glu residues (PubMed:23586797). The following step is performed by the carbon sulfur lyase domain ataI of ataIMG which may convert the bis-cysteinyl adduct to yield an epidithiol intermediate (PubMed:23586797). The ataT domain from ataTC then catalyzes the oxidation of the free dithiols, followed by a cyclization step catalyzed by the cytochrome P450 ataF (PubMed:23586797). AtaF probably acts as an epoxidase to promote a dual epoxidation formation at C8 and C9 along with C8' and C9', followed by the spontaneous nucleophilic attack of the amide nitrogens N10 and N10' to yield an intermediate with the pyrrolidine partial structure (PubMed:23586797). The final steps of acetylaranotin biosynthesis involve the acetylation and ring rearrangement of an epitetrathiodiketopiperazine intermediate to produce acetylaranotin (PubMed:23586797). AtaH probably catalyzes the acetylation of epitetrathiodiketopiperazine to produce a diacetate and ataY is responsible for the formation of the dihydrooxepin moiety that converts the diacetate intermediate to acetylaranotin via acetylapoaranotin (PubMed:23586797). Both enzymes could function independently in the absence of the other (PubMed:23586797). The acetylaranotin bis-thiomethyltransferase ataS located outside of acetylaranotin gene cluster is the main thiomethyltransferase responsible for converting acetylaranotin and its related intermediates to their methylated forms (PubMed:30096370).</text>
</comment>
<comment type="catalytic activity">
    <reaction evidence="1">
        <text>an L-aminoacyl-L-amino acid + H2O = 2 an L-alpha-amino acid</text>
        <dbReference type="Rhea" id="RHEA:48940"/>
        <dbReference type="ChEBI" id="CHEBI:15377"/>
        <dbReference type="ChEBI" id="CHEBI:59869"/>
        <dbReference type="ChEBI" id="CHEBI:77460"/>
        <dbReference type="EC" id="3.4.13.19"/>
    </reaction>
</comment>
<comment type="cofactor">
    <cofactor evidence="1">
        <name>Zn(2+)</name>
        <dbReference type="ChEBI" id="CHEBI:29105"/>
    </cofactor>
</comment>
<comment type="pathway">
    <text evidence="3">Mycotoxin biosynthesis.</text>
</comment>
<comment type="disruption phenotype">
    <text evidence="3">Impairs the production of acetylaranotin and accumulates chemically stable intermediate cyclo-L-phe-L-phe or shunt products such as 2-hydroxy-2'-ene-cyclo-L-Phe-L-Phe and 2-imino-10'-hydroxy-cyclo-L-Phe-L-Phe (PubMed:23586797).</text>
</comment>
<comment type="similarity">
    <text evidence="1">Belongs to the metallo-dependent hydrolases superfamily. Peptidase M19 family.</text>
</comment>
<proteinExistence type="inferred from homology"/>